<name>KEFG_ERWT9</name>
<sequence length="184" mass="21522">MMSQPPKVLLLYAHPESQDSIANRVLLQPARHAQHVTVHDLYAHYPDFFIDIHHEQQLLREHQIIVFQHPLYTYSCPALLKEWLDRVLSRGFASGPGGNELEGKYWRSVITTGEPEAAYHQQGLNRYPMSDIMRPFELTAQMCRMHWMTPMIIYWARRQSAETMKHYARAYGDWLENPLPHGGV</sequence>
<comment type="function">
    <text evidence="1">Regulatory subunit of a potassium efflux system that confers protection against electrophiles. Required for full activity of KefB.</text>
</comment>
<comment type="catalytic activity">
    <reaction evidence="1">
        <text>a quinone + NADH + H(+) = a quinol + NAD(+)</text>
        <dbReference type="Rhea" id="RHEA:46160"/>
        <dbReference type="ChEBI" id="CHEBI:15378"/>
        <dbReference type="ChEBI" id="CHEBI:24646"/>
        <dbReference type="ChEBI" id="CHEBI:57540"/>
        <dbReference type="ChEBI" id="CHEBI:57945"/>
        <dbReference type="ChEBI" id="CHEBI:132124"/>
        <dbReference type="EC" id="1.6.5.2"/>
    </reaction>
</comment>
<comment type="catalytic activity">
    <reaction evidence="1">
        <text>a quinone + NADPH + H(+) = a quinol + NADP(+)</text>
        <dbReference type="Rhea" id="RHEA:46164"/>
        <dbReference type="ChEBI" id="CHEBI:15378"/>
        <dbReference type="ChEBI" id="CHEBI:24646"/>
        <dbReference type="ChEBI" id="CHEBI:57783"/>
        <dbReference type="ChEBI" id="CHEBI:58349"/>
        <dbReference type="ChEBI" id="CHEBI:132124"/>
        <dbReference type="EC" id="1.6.5.2"/>
    </reaction>
</comment>
<comment type="subunit">
    <text evidence="1">Interacts with KefB.</text>
</comment>
<comment type="subcellular location">
    <subcellularLocation>
        <location evidence="1">Cell inner membrane</location>
        <topology evidence="1">Peripheral membrane protein</topology>
        <orientation evidence="1">Cytoplasmic side</orientation>
    </subcellularLocation>
</comment>
<comment type="similarity">
    <text evidence="1">Belongs to the NAD(P)H dehydrogenase (quinone) family. KefG subfamily.</text>
</comment>
<evidence type="ECO:0000255" key="1">
    <source>
        <dbReference type="HAMAP-Rule" id="MF_01415"/>
    </source>
</evidence>
<reference key="1">
    <citation type="journal article" date="2008" name="Environ. Microbiol.">
        <title>The genome of Erwinia tasmaniensis strain Et1/99, a non-pathogenic bacterium in the genus Erwinia.</title>
        <authorList>
            <person name="Kube M."/>
            <person name="Migdoll A.M."/>
            <person name="Mueller I."/>
            <person name="Kuhl H."/>
            <person name="Beck A."/>
            <person name="Reinhardt R."/>
            <person name="Geider K."/>
        </authorList>
    </citation>
    <scope>NUCLEOTIDE SEQUENCE [LARGE SCALE GENOMIC DNA]</scope>
    <source>
        <strain>DSM 17950 / CFBP 7177 / CIP 109463 / NCPPB 4357 / Et1/99</strain>
    </source>
</reference>
<gene>
    <name evidence="1" type="primary">kefG</name>
    <name type="ordered locus">ETA_31790</name>
</gene>
<accession>B2VK48</accession>
<feature type="chain" id="PRO_1000145579" description="Glutathione-regulated potassium-efflux system ancillary protein KefG">
    <location>
        <begin position="1"/>
        <end position="184"/>
    </location>
</feature>
<keyword id="KW-0997">Cell inner membrane</keyword>
<keyword id="KW-1003">Cell membrane</keyword>
<keyword id="KW-0472">Membrane</keyword>
<keyword id="KW-0520">NAD</keyword>
<keyword id="KW-0560">Oxidoreductase</keyword>
<keyword id="KW-1185">Reference proteome</keyword>
<organism>
    <name type="scientific">Erwinia tasmaniensis (strain DSM 17950 / CFBP 7177 / CIP 109463 / NCPPB 4357 / Et1/99)</name>
    <dbReference type="NCBI Taxonomy" id="465817"/>
    <lineage>
        <taxon>Bacteria</taxon>
        <taxon>Pseudomonadati</taxon>
        <taxon>Pseudomonadota</taxon>
        <taxon>Gammaproteobacteria</taxon>
        <taxon>Enterobacterales</taxon>
        <taxon>Erwiniaceae</taxon>
        <taxon>Erwinia</taxon>
    </lineage>
</organism>
<proteinExistence type="inferred from homology"/>
<dbReference type="EC" id="1.6.5.2" evidence="1"/>
<dbReference type="EMBL" id="CU468135">
    <property type="protein sequence ID" value="CAO98225.1"/>
    <property type="molecule type" value="Genomic_DNA"/>
</dbReference>
<dbReference type="SMR" id="B2VK48"/>
<dbReference type="STRING" id="465817.ETA_31790"/>
<dbReference type="KEGG" id="eta:ETA_31790"/>
<dbReference type="eggNOG" id="COG2249">
    <property type="taxonomic scope" value="Bacteria"/>
</dbReference>
<dbReference type="HOGENOM" id="CLU_058643_0_1_6"/>
<dbReference type="Proteomes" id="UP000001726">
    <property type="component" value="Chromosome"/>
</dbReference>
<dbReference type="GO" id="GO:0005886">
    <property type="term" value="C:plasma membrane"/>
    <property type="evidence" value="ECO:0007669"/>
    <property type="project" value="UniProtKB-SubCell"/>
</dbReference>
<dbReference type="GO" id="GO:0009055">
    <property type="term" value="F:electron transfer activity"/>
    <property type="evidence" value="ECO:0007669"/>
    <property type="project" value="TreeGrafter"/>
</dbReference>
<dbReference type="GO" id="GO:0010181">
    <property type="term" value="F:FMN binding"/>
    <property type="evidence" value="ECO:0007669"/>
    <property type="project" value="TreeGrafter"/>
</dbReference>
<dbReference type="GO" id="GO:0050136">
    <property type="term" value="F:NADH:ubiquinone reductase (non-electrogenic) activity"/>
    <property type="evidence" value="ECO:0007669"/>
    <property type="project" value="RHEA"/>
</dbReference>
<dbReference type="GO" id="GO:0008753">
    <property type="term" value="F:NADPH dehydrogenase (quinone) activity"/>
    <property type="evidence" value="ECO:0007669"/>
    <property type="project" value="RHEA"/>
</dbReference>
<dbReference type="GO" id="GO:1901381">
    <property type="term" value="P:positive regulation of potassium ion transmembrane transport"/>
    <property type="evidence" value="ECO:0007669"/>
    <property type="project" value="UniProtKB-UniRule"/>
</dbReference>
<dbReference type="GO" id="GO:0006813">
    <property type="term" value="P:potassium ion transport"/>
    <property type="evidence" value="ECO:0007669"/>
    <property type="project" value="InterPro"/>
</dbReference>
<dbReference type="FunFam" id="3.40.50.360:FF:000013">
    <property type="entry name" value="Glutathione-regulated potassium-efflux system ancillary protein KefG"/>
    <property type="match status" value="1"/>
</dbReference>
<dbReference type="Gene3D" id="3.40.50.360">
    <property type="match status" value="1"/>
</dbReference>
<dbReference type="HAMAP" id="MF_01415">
    <property type="entry name" value="K_H_efflux_KefG"/>
    <property type="match status" value="1"/>
</dbReference>
<dbReference type="InterPro" id="IPR003680">
    <property type="entry name" value="Flavodoxin_fold"/>
</dbReference>
<dbReference type="InterPro" id="IPR029039">
    <property type="entry name" value="Flavoprotein-like_sf"/>
</dbReference>
<dbReference type="InterPro" id="IPR023947">
    <property type="entry name" value="K_H_efflux_KefG"/>
</dbReference>
<dbReference type="InterPro" id="IPR046980">
    <property type="entry name" value="KefG/KefF"/>
</dbReference>
<dbReference type="NCBIfam" id="NF003430">
    <property type="entry name" value="PRK04930.1"/>
    <property type="match status" value="1"/>
</dbReference>
<dbReference type="PANTHER" id="PTHR47307">
    <property type="entry name" value="GLUTATHIONE-REGULATED POTASSIUM-EFFLUX SYSTEM ANCILLARY PROTEIN KEFG"/>
    <property type="match status" value="1"/>
</dbReference>
<dbReference type="PANTHER" id="PTHR47307:SF1">
    <property type="entry name" value="GLUTATHIONE-REGULATED POTASSIUM-EFFLUX SYSTEM ANCILLARY PROTEIN KEFG"/>
    <property type="match status" value="1"/>
</dbReference>
<dbReference type="Pfam" id="PF02525">
    <property type="entry name" value="Flavodoxin_2"/>
    <property type="match status" value="1"/>
</dbReference>
<dbReference type="SUPFAM" id="SSF52218">
    <property type="entry name" value="Flavoproteins"/>
    <property type="match status" value="1"/>
</dbReference>
<protein>
    <recommendedName>
        <fullName evidence="1">Glutathione-regulated potassium-efflux system ancillary protein KefG</fullName>
    </recommendedName>
    <alternativeName>
        <fullName evidence="1">Putative quinone oxidoreductase KefG</fullName>
        <ecNumber evidence="1">1.6.5.2</ecNumber>
    </alternativeName>
</protein>